<feature type="chain" id="PRO_1000076270" description="Histidine--tRNA ligase">
    <location>
        <begin position="1"/>
        <end position="424"/>
    </location>
</feature>
<name>SYH_ECOLC</name>
<organism>
    <name type="scientific">Escherichia coli (strain ATCC 8739 / DSM 1576 / NBRC 3972 / NCIMB 8545 / WDCM 00012 / Crooks)</name>
    <dbReference type="NCBI Taxonomy" id="481805"/>
    <lineage>
        <taxon>Bacteria</taxon>
        <taxon>Pseudomonadati</taxon>
        <taxon>Pseudomonadota</taxon>
        <taxon>Gammaproteobacteria</taxon>
        <taxon>Enterobacterales</taxon>
        <taxon>Enterobacteriaceae</taxon>
        <taxon>Escherichia</taxon>
    </lineage>
</organism>
<sequence>MAKNIQAIRGMNDYLPGETAIWQRIEGTLKNVLGSYGYSEIRLPIVEQTPLFKRAIGEVTDVVEKEMYTFEDRNGDSLTLRPEGTAGCVRAGIEHGLLYNQEQRLWYIGPMFRHERPQKGRYRQFHQLGCEVFGLQGPDIDAELIMLTARWWRALGISEHVTLELNSIGSLEARANYRDALVAFLEQHKEKLDEDCKRRMYTNPLRVLDSKNPEVQALLNDAPALGDYLDEESREHFAGLCKLLESAGIAYTVNQRLVRGLDYYNRTVFEWVTNSLGSQGTVCAGGRYDGLVEQLGGRATPAVGFAMGLERLVLLVQAVNPEFKADPVVDIYLVASGADTQSAAMALAERLRDELPGVKLMTNHGGGNFKKQFARADKWGARVAVVLGESEVANGTAVVKDLRSGEQTAVAQDSVAAHLRTLLG</sequence>
<comment type="catalytic activity">
    <reaction evidence="1">
        <text>tRNA(His) + L-histidine + ATP = L-histidyl-tRNA(His) + AMP + diphosphate + H(+)</text>
        <dbReference type="Rhea" id="RHEA:17313"/>
        <dbReference type="Rhea" id="RHEA-COMP:9665"/>
        <dbReference type="Rhea" id="RHEA-COMP:9689"/>
        <dbReference type="ChEBI" id="CHEBI:15378"/>
        <dbReference type="ChEBI" id="CHEBI:30616"/>
        <dbReference type="ChEBI" id="CHEBI:33019"/>
        <dbReference type="ChEBI" id="CHEBI:57595"/>
        <dbReference type="ChEBI" id="CHEBI:78442"/>
        <dbReference type="ChEBI" id="CHEBI:78527"/>
        <dbReference type="ChEBI" id="CHEBI:456215"/>
        <dbReference type="EC" id="6.1.1.21"/>
    </reaction>
</comment>
<comment type="subunit">
    <text evidence="1">Homodimer.</text>
</comment>
<comment type="subcellular location">
    <subcellularLocation>
        <location evidence="1">Cytoplasm</location>
    </subcellularLocation>
</comment>
<comment type="similarity">
    <text evidence="1">Belongs to the class-II aminoacyl-tRNA synthetase family.</text>
</comment>
<dbReference type="EC" id="6.1.1.21" evidence="1"/>
<dbReference type="EMBL" id="CP000946">
    <property type="protein sequence ID" value="ACA76830.1"/>
    <property type="molecule type" value="Genomic_DNA"/>
</dbReference>
<dbReference type="RefSeq" id="WP_001107167.1">
    <property type="nucleotide sequence ID" value="NZ_MTFT01000002.1"/>
</dbReference>
<dbReference type="SMR" id="B1IWE7"/>
<dbReference type="GeneID" id="75206207"/>
<dbReference type="KEGG" id="ecl:EcolC_1163"/>
<dbReference type="HOGENOM" id="CLU_025113_1_1_6"/>
<dbReference type="GO" id="GO:0005737">
    <property type="term" value="C:cytoplasm"/>
    <property type="evidence" value="ECO:0007669"/>
    <property type="project" value="UniProtKB-SubCell"/>
</dbReference>
<dbReference type="GO" id="GO:0005524">
    <property type="term" value="F:ATP binding"/>
    <property type="evidence" value="ECO:0007669"/>
    <property type="project" value="UniProtKB-UniRule"/>
</dbReference>
<dbReference type="GO" id="GO:0004821">
    <property type="term" value="F:histidine-tRNA ligase activity"/>
    <property type="evidence" value="ECO:0007669"/>
    <property type="project" value="UniProtKB-UniRule"/>
</dbReference>
<dbReference type="GO" id="GO:0006427">
    <property type="term" value="P:histidyl-tRNA aminoacylation"/>
    <property type="evidence" value="ECO:0007669"/>
    <property type="project" value="UniProtKB-UniRule"/>
</dbReference>
<dbReference type="CDD" id="cd00773">
    <property type="entry name" value="HisRS-like_core"/>
    <property type="match status" value="1"/>
</dbReference>
<dbReference type="CDD" id="cd00859">
    <property type="entry name" value="HisRS_anticodon"/>
    <property type="match status" value="1"/>
</dbReference>
<dbReference type="FunFam" id="3.30.930.10:FF:000005">
    <property type="entry name" value="Histidine--tRNA ligase"/>
    <property type="match status" value="1"/>
</dbReference>
<dbReference type="FunFam" id="3.40.50.800:FF:000007">
    <property type="entry name" value="Histidine--tRNA ligase"/>
    <property type="match status" value="1"/>
</dbReference>
<dbReference type="Gene3D" id="3.40.50.800">
    <property type="entry name" value="Anticodon-binding domain"/>
    <property type="match status" value="1"/>
</dbReference>
<dbReference type="Gene3D" id="3.30.930.10">
    <property type="entry name" value="Bira Bifunctional Protein, Domain 2"/>
    <property type="match status" value="1"/>
</dbReference>
<dbReference type="HAMAP" id="MF_00127">
    <property type="entry name" value="His_tRNA_synth"/>
    <property type="match status" value="1"/>
</dbReference>
<dbReference type="InterPro" id="IPR006195">
    <property type="entry name" value="aa-tRNA-synth_II"/>
</dbReference>
<dbReference type="InterPro" id="IPR045864">
    <property type="entry name" value="aa-tRNA-synth_II/BPL/LPL"/>
</dbReference>
<dbReference type="InterPro" id="IPR004154">
    <property type="entry name" value="Anticodon-bd"/>
</dbReference>
<dbReference type="InterPro" id="IPR036621">
    <property type="entry name" value="Anticodon-bd_dom_sf"/>
</dbReference>
<dbReference type="InterPro" id="IPR015807">
    <property type="entry name" value="His-tRNA-ligase"/>
</dbReference>
<dbReference type="InterPro" id="IPR041715">
    <property type="entry name" value="HisRS-like_core"/>
</dbReference>
<dbReference type="InterPro" id="IPR004516">
    <property type="entry name" value="HisRS/HisZ"/>
</dbReference>
<dbReference type="InterPro" id="IPR033656">
    <property type="entry name" value="HisRS_anticodon"/>
</dbReference>
<dbReference type="NCBIfam" id="TIGR00442">
    <property type="entry name" value="hisS"/>
    <property type="match status" value="1"/>
</dbReference>
<dbReference type="PANTHER" id="PTHR43707:SF1">
    <property type="entry name" value="HISTIDINE--TRNA LIGASE, MITOCHONDRIAL-RELATED"/>
    <property type="match status" value="1"/>
</dbReference>
<dbReference type="PANTHER" id="PTHR43707">
    <property type="entry name" value="HISTIDYL-TRNA SYNTHETASE"/>
    <property type="match status" value="1"/>
</dbReference>
<dbReference type="Pfam" id="PF03129">
    <property type="entry name" value="HGTP_anticodon"/>
    <property type="match status" value="1"/>
</dbReference>
<dbReference type="Pfam" id="PF13393">
    <property type="entry name" value="tRNA-synt_His"/>
    <property type="match status" value="1"/>
</dbReference>
<dbReference type="PIRSF" id="PIRSF001549">
    <property type="entry name" value="His-tRNA_synth"/>
    <property type="match status" value="1"/>
</dbReference>
<dbReference type="SUPFAM" id="SSF52954">
    <property type="entry name" value="Class II aaRS ABD-related"/>
    <property type="match status" value="1"/>
</dbReference>
<dbReference type="SUPFAM" id="SSF55681">
    <property type="entry name" value="Class II aaRS and biotin synthetases"/>
    <property type="match status" value="1"/>
</dbReference>
<dbReference type="PROSITE" id="PS50862">
    <property type="entry name" value="AA_TRNA_LIGASE_II"/>
    <property type="match status" value="1"/>
</dbReference>
<reference key="1">
    <citation type="submission" date="2008-02" db="EMBL/GenBank/DDBJ databases">
        <title>Complete sequence of Escherichia coli C str. ATCC 8739.</title>
        <authorList>
            <person name="Copeland A."/>
            <person name="Lucas S."/>
            <person name="Lapidus A."/>
            <person name="Glavina del Rio T."/>
            <person name="Dalin E."/>
            <person name="Tice H."/>
            <person name="Bruce D."/>
            <person name="Goodwin L."/>
            <person name="Pitluck S."/>
            <person name="Kiss H."/>
            <person name="Brettin T."/>
            <person name="Detter J.C."/>
            <person name="Han C."/>
            <person name="Kuske C.R."/>
            <person name="Schmutz J."/>
            <person name="Larimer F."/>
            <person name="Land M."/>
            <person name="Hauser L."/>
            <person name="Kyrpides N."/>
            <person name="Mikhailova N."/>
            <person name="Ingram L."/>
            <person name="Richardson P."/>
        </authorList>
    </citation>
    <scope>NUCLEOTIDE SEQUENCE [LARGE SCALE GENOMIC DNA]</scope>
    <source>
        <strain>ATCC 8739 / DSM 1576 / NBRC 3972 / NCIMB 8545 / WDCM 00012 / Crooks</strain>
    </source>
</reference>
<keyword id="KW-0030">Aminoacyl-tRNA synthetase</keyword>
<keyword id="KW-0067">ATP-binding</keyword>
<keyword id="KW-0963">Cytoplasm</keyword>
<keyword id="KW-0436">Ligase</keyword>
<keyword id="KW-0547">Nucleotide-binding</keyword>
<keyword id="KW-0648">Protein biosynthesis</keyword>
<proteinExistence type="inferred from homology"/>
<evidence type="ECO:0000255" key="1">
    <source>
        <dbReference type="HAMAP-Rule" id="MF_00127"/>
    </source>
</evidence>
<gene>
    <name evidence="1" type="primary">hisS</name>
    <name type="ordered locus">EcolC_1163</name>
</gene>
<protein>
    <recommendedName>
        <fullName evidence="1">Histidine--tRNA ligase</fullName>
        <ecNumber evidence="1">6.1.1.21</ecNumber>
    </recommendedName>
    <alternativeName>
        <fullName evidence="1">Histidyl-tRNA synthetase</fullName>
        <shortName evidence="1">HisRS</shortName>
    </alternativeName>
</protein>
<accession>B1IWE7</accession>